<sequence>MKLQVLPLSQEAFSAYGDVIETQQRDFFHINNGLVERYHDLALVEILEQDRTLISINRAQPANLPLTIHELERHPLGTQAFIPMKGEVFVVVVALGDDKPDLSTLRAFITNGEQGVNYHRNVWHHPLFAWQRVTDFLTIDRGGSDNCDVESIPEQELCFA</sequence>
<organism>
    <name type="scientific">Shigella boydii serotype 4 (strain Sb227)</name>
    <dbReference type="NCBI Taxonomy" id="300268"/>
    <lineage>
        <taxon>Bacteria</taxon>
        <taxon>Pseudomonadati</taxon>
        <taxon>Pseudomonadota</taxon>
        <taxon>Gammaproteobacteria</taxon>
        <taxon>Enterobacterales</taxon>
        <taxon>Enterobacteriaceae</taxon>
        <taxon>Shigella</taxon>
    </lineage>
</organism>
<dbReference type="EC" id="4.3.2.3" evidence="1"/>
<dbReference type="EMBL" id="CP000036">
    <property type="protein sequence ID" value="ABB65117.1"/>
    <property type="molecule type" value="Genomic_DNA"/>
</dbReference>
<dbReference type="RefSeq" id="WP_000776388.1">
    <property type="nucleotide sequence ID" value="NC_007613.1"/>
</dbReference>
<dbReference type="SMR" id="Q324Z1"/>
<dbReference type="GeneID" id="75202348"/>
<dbReference type="KEGG" id="sbo:SBO_0409"/>
<dbReference type="HOGENOM" id="CLU_070848_1_1_6"/>
<dbReference type="UniPathway" id="UPA00395"/>
<dbReference type="Proteomes" id="UP000007067">
    <property type="component" value="Chromosome"/>
</dbReference>
<dbReference type="GO" id="GO:0004848">
    <property type="term" value="F:ureidoglycolate hydrolase activity"/>
    <property type="evidence" value="ECO:0007669"/>
    <property type="project" value="InterPro"/>
</dbReference>
<dbReference type="GO" id="GO:0050385">
    <property type="term" value="F:ureidoglycolate lyase activity"/>
    <property type="evidence" value="ECO:0007669"/>
    <property type="project" value="UniProtKB-UniRule"/>
</dbReference>
<dbReference type="GO" id="GO:0000256">
    <property type="term" value="P:allantoin catabolic process"/>
    <property type="evidence" value="ECO:0007669"/>
    <property type="project" value="UniProtKB-UniRule"/>
</dbReference>
<dbReference type="GO" id="GO:0006145">
    <property type="term" value="P:purine nucleobase catabolic process"/>
    <property type="evidence" value="ECO:0007669"/>
    <property type="project" value="UniProtKB-UniRule"/>
</dbReference>
<dbReference type="CDD" id="cd20298">
    <property type="entry name" value="cupin_UAH"/>
    <property type="match status" value="1"/>
</dbReference>
<dbReference type="FunFam" id="2.60.120.480:FF:000001">
    <property type="entry name" value="Ureidoglycolate lyase"/>
    <property type="match status" value="1"/>
</dbReference>
<dbReference type="Gene3D" id="2.60.120.480">
    <property type="entry name" value="Ureidoglycolate hydrolase"/>
    <property type="match status" value="1"/>
</dbReference>
<dbReference type="HAMAP" id="MF_00616">
    <property type="entry name" value="Ureidogly_lyase"/>
    <property type="match status" value="1"/>
</dbReference>
<dbReference type="InterPro" id="IPR011051">
    <property type="entry name" value="RmlC_Cupin_sf"/>
</dbReference>
<dbReference type="InterPro" id="IPR047233">
    <property type="entry name" value="UAH_cupin"/>
</dbReference>
<dbReference type="InterPro" id="IPR007247">
    <property type="entry name" value="Ureidogly_lyase"/>
</dbReference>
<dbReference type="InterPro" id="IPR023525">
    <property type="entry name" value="Ureidogly_lyase_bac"/>
</dbReference>
<dbReference type="InterPro" id="IPR024060">
    <property type="entry name" value="Ureidoglycolate_lyase_dom_sf"/>
</dbReference>
<dbReference type="NCBIfam" id="NF002948">
    <property type="entry name" value="PRK03606.1-1"/>
    <property type="match status" value="1"/>
</dbReference>
<dbReference type="NCBIfam" id="NF009932">
    <property type="entry name" value="PRK13395.1"/>
    <property type="match status" value="1"/>
</dbReference>
<dbReference type="PANTHER" id="PTHR21221">
    <property type="entry name" value="UREIDOGLYCOLATE HYDROLASE"/>
    <property type="match status" value="1"/>
</dbReference>
<dbReference type="PANTHER" id="PTHR21221:SF1">
    <property type="entry name" value="UREIDOGLYCOLATE LYASE"/>
    <property type="match status" value="1"/>
</dbReference>
<dbReference type="Pfam" id="PF04115">
    <property type="entry name" value="Ureidogly_lyase"/>
    <property type="match status" value="1"/>
</dbReference>
<dbReference type="PIRSF" id="PIRSF017306">
    <property type="entry name" value="Ureidogly_hydro"/>
    <property type="match status" value="1"/>
</dbReference>
<dbReference type="SUPFAM" id="SSF51182">
    <property type="entry name" value="RmlC-like cupins"/>
    <property type="match status" value="1"/>
</dbReference>
<keyword id="KW-0456">Lyase</keyword>
<keyword id="KW-0659">Purine metabolism</keyword>
<evidence type="ECO:0000255" key="1">
    <source>
        <dbReference type="HAMAP-Rule" id="MF_00616"/>
    </source>
</evidence>
<accession>Q324Z1</accession>
<name>ALLA_SHIBS</name>
<feature type="chain" id="PRO_1000061369" description="Ureidoglycolate lyase">
    <location>
        <begin position="1"/>
        <end position="160"/>
    </location>
</feature>
<protein>
    <recommendedName>
        <fullName evidence="1">Ureidoglycolate lyase</fullName>
        <ecNumber evidence="1">4.3.2.3</ecNumber>
    </recommendedName>
    <alternativeName>
        <fullName evidence="1">Ureidoglycolatase</fullName>
    </alternativeName>
</protein>
<gene>
    <name evidence="1" type="primary">allA</name>
    <name type="ordered locus">SBO_0409</name>
</gene>
<reference key="1">
    <citation type="journal article" date="2005" name="Nucleic Acids Res.">
        <title>Genome dynamics and diversity of Shigella species, the etiologic agents of bacillary dysentery.</title>
        <authorList>
            <person name="Yang F."/>
            <person name="Yang J."/>
            <person name="Zhang X."/>
            <person name="Chen L."/>
            <person name="Jiang Y."/>
            <person name="Yan Y."/>
            <person name="Tang X."/>
            <person name="Wang J."/>
            <person name="Xiong Z."/>
            <person name="Dong J."/>
            <person name="Xue Y."/>
            <person name="Zhu Y."/>
            <person name="Xu X."/>
            <person name="Sun L."/>
            <person name="Chen S."/>
            <person name="Nie H."/>
            <person name="Peng J."/>
            <person name="Xu J."/>
            <person name="Wang Y."/>
            <person name="Yuan Z."/>
            <person name="Wen Y."/>
            <person name="Yao Z."/>
            <person name="Shen Y."/>
            <person name="Qiang B."/>
            <person name="Hou Y."/>
            <person name="Yu J."/>
            <person name="Jin Q."/>
        </authorList>
    </citation>
    <scope>NUCLEOTIDE SEQUENCE [LARGE SCALE GENOMIC DNA]</scope>
    <source>
        <strain>Sb227</strain>
    </source>
</reference>
<comment type="function">
    <text evidence="1">Catalyzes the catabolism of the allantoin degradation intermediate (S)-ureidoglycolate, generating urea and glyoxylate. Involved in the anaerobic utilization of allantoin as sole nitrogen source. Reinforces the induction of genes involved in the degradation of allantoin and glyoxylate by producing glyoxylate.</text>
</comment>
<comment type="catalytic activity">
    <reaction evidence="1">
        <text>(S)-ureidoglycolate = urea + glyoxylate</text>
        <dbReference type="Rhea" id="RHEA:11304"/>
        <dbReference type="ChEBI" id="CHEBI:16199"/>
        <dbReference type="ChEBI" id="CHEBI:36655"/>
        <dbReference type="ChEBI" id="CHEBI:57296"/>
        <dbReference type="EC" id="4.3.2.3"/>
    </reaction>
</comment>
<comment type="cofactor">
    <cofactor evidence="1">
        <name>Ni(2+)</name>
        <dbReference type="ChEBI" id="CHEBI:49786"/>
    </cofactor>
</comment>
<comment type="pathway">
    <text evidence="1">Nitrogen metabolism; (S)-allantoin degradation.</text>
</comment>
<comment type="subunit">
    <text evidence="1">Homodimer.</text>
</comment>
<comment type="similarity">
    <text evidence="1">Belongs to the ureidoglycolate lyase family.</text>
</comment>
<proteinExistence type="inferred from homology"/>